<protein>
    <recommendedName>
        <fullName>Pyruvate formate-lyase-activating enzyme</fullName>
        <shortName>PFL-activating enzyme</shortName>
        <ecNumber>1.97.1.4</ecNumber>
    </recommendedName>
</protein>
<comment type="function">
    <text evidence="1">Activation of pyruvate formate-lyase under anaerobic conditions by generation of an organic free radical, using S-adenosylmethionine and reduced flavodoxin as cosubstrates to produce 5'-deoxy-adenosine.</text>
</comment>
<comment type="catalytic activity">
    <reaction>
        <text>glycyl-[formate C-acetyltransferase] + reduced [flavodoxin] + S-adenosyl-L-methionine = glycin-2-yl radical-[formate C-acetyltransferase] + semiquinone [flavodoxin] + 5'-deoxyadenosine + L-methionine + H(+)</text>
        <dbReference type="Rhea" id="RHEA:19225"/>
        <dbReference type="Rhea" id="RHEA-COMP:10622"/>
        <dbReference type="Rhea" id="RHEA-COMP:12190"/>
        <dbReference type="Rhea" id="RHEA-COMP:12191"/>
        <dbReference type="Rhea" id="RHEA-COMP:14480"/>
        <dbReference type="ChEBI" id="CHEBI:15378"/>
        <dbReference type="ChEBI" id="CHEBI:17319"/>
        <dbReference type="ChEBI" id="CHEBI:29947"/>
        <dbReference type="ChEBI" id="CHEBI:32722"/>
        <dbReference type="ChEBI" id="CHEBI:57618"/>
        <dbReference type="ChEBI" id="CHEBI:57844"/>
        <dbReference type="ChEBI" id="CHEBI:59789"/>
        <dbReference type="ChEBI" id="CHEBI:140311"/>
        <dbReference type="EC" id="1.97.1.4"/>
    </reaction>
</comment>
<comment type="cofactor">
    <cofactor evidence="1">
        <name>[4Fe-4S] cluster</name>
        <dbReference type="ChEBI" id="CHEBI:49883"/>
    </cofactor>
    <text evidence="1">Binds 1 [4Fe-4S] cluster. The cluster is coordinated with 3 cysteines and an exchangeable S-adenosyl-L-methionine.</text>
</comment>
<comment type="subcellular location">
    <subcellularLocation>
        <location evidence="1">Cytoplasm</location>
    </subcellularLocation>
</comment>
<comment type="similarity">
    <text evidence="4">Belongs to the organic radical-activating enzymes family.</text>
</comment>
<organism>
    <name type="scientific">Listeria monocytogenes serovar 1/2a (strain ATCC BAA-679 / EGD-e)</name>
    <dbReference type="NCBI Taxonomy" id="169963"/>
    <lineage>
        <taxon>Bacteria</taxon>
        <taxon>Bacillati</taxon>
        <taxon>Bacillota</taxon>
        <taxon>Bacilli</taxon>
        <taxon>Bacillales</taxon>
        <taxon>Listeriaceae</taxon>
        <taxon>Listeria</taxon>
    </lineage>
</organism>
<reference key="1">
    <citation type="journal article" date="1999" name="FEMS Microbiol. Lett.">
        <title>Identification of a new locus in Listeria monocytogenes involved in cellobiose-dependent repression of hly expression.</title>
        <authorList>
            <person name="Huillet E.E.H."/>
            <person name="Larpin S."/>
            <person name="Pardon P."/>
            <person name="Berche P."/>
        </authorList>
    </citation>
    <scope>NUCLEOTIDE SEQUENCE [GENOMIC DNA]</scope>
</reference>
<reference key="2">
    <citation type="journal article" date="2001" name="Science">
        <title>Comparative genomics of Listeria species.</title>
        <authorList>
            <person name="Glaser P."/>
            <person name="Frangeul L."/>
            <person name="Buchrieser C."/>
            <person name="Rusniok C."/>
            <person name="Amend A."/>
            <person name="Baquero F."/>
            <person name="Berche P."/>
            <person name="Bloecker H."/>
            <person name="Brandt P."/>
            <person name="Chakraborty T."/>
            <person name="Charbit A."/>
            <person name="Chetouani F."/>
            <person name="Couve E."/>
            <person name="de Daruvar A."/>
            <person name="Dehoux P."/>
            <person name="Domann E."/>
            <person name="Dominguez-Bernal G."/>
            <person name="Duchaud E."/>
            <person name="Durant L."/>
            <person name="Dussurget O."/>
            <person name="Entian K.-D."/>
            <person name="Fsihi H."/>
            <person name="Garcia-del Portillo F."/>
            <person name="Garrido P."/>
            <person name="Gautier L."/>
            <person name="Goebel W."/>
            <person name="Gomez-Lopez N."/>
            <person name="Hain T."/>
            <person name="Hauf J."/>
            <person name="Jackson D."/>
            <person name="Jones L.-M."/>
            <person name="Kaerst U."/>
            <person name="Kreft J."/>
            <person name="Kuhn M."/>
            <person name="Kunst F."/>
            <person name="Kurapkat G."/>
            <person name="Madueno E."/>
            <person name="Maitournam A."/>
            <person name="Mata Vicente J."/>
            <person name="Ng E."/>
            <person name="Nedjari H."/>
            <person name="Nordsiek G."/>
            <person name="Novella S."/>
            <person name="de Pablos B."/>
            <person name="Perez-Diaz J.-C."/>
            <person name="Purcell R."/>
            <person name="Remmel B."/>
            <person name="Rose M."/>
            <person name="Schlueter T."/>
            <person name="Simoes N."/>
            <person name="Tierrez A."/>
            <person name="Vazquez-Boland J.-A."/>
            <person name="Voss H."/>
            <person name="Wehland J."/>
            <person name="Cossart P."/>
        </authorList>
    </citation>
    <scope>NUCLEOTIDE SEQUENCE [LARGE SCALE GENOMIC DNA]</scope>
    <source>
        <strain>ATCC BAA-679 / EGD-e</strain>
    </source>
</reference>
<proteinExistence type="inferred from homology"/>
<keyword id="KW-0004">4Fe-4S</keyword>
<keyword id="KW-0963">Cytoplasm</keyword>
<keyword id="KW-0408">Iron</keyword>
<keyword id="KW-0411">Iron-sulfur</keyword>
<keyword id="KW-0479">Metal-binding</keyword>
<keyword id="KW-0560">Oxidoreductase</keyword>
<keyword id="KW-1185">Reference proteome</keyword>
<keyword id="KW-0949">S-adenosyl-L-methionine</keyword>
<gene>
    <name type="primary">pflA</name>
    <name type="synonym">pflC</name>
    <name type="ordered locus">lmo1407</name>
</gene>
<accession>P0A442</accession>
<accession>Q9X767</accession>
<dbReference type="EC" id="1.97.1.4"/>
<dbReference type="EMBL" id="AJ009627">
    <property type="protein sequence ID" value="CAB43713.1"/>
    <property type="molecule type" value="Genomic_DNA"/>
</dbReference>
<dbReference type="EMBL" id="AL591979">
    <property type="protein sequence ID" value="CAC99485.1"/>
    <property type="molecule type" value="Genomic_DNA"/>
</dbReference>
<dbReference type="PIR" id="AG1250">
    <property type="entry name" value="AG1250"/>
</dbReference>
<dbReference type="PIR" id="T46708">
    <property type="entry name" value="T46708"/>
</dbReference>
<dbReference type="RefSeq" id="NP_464932.1">
    <property type="nucleotide sequence ID" value="NC_003210.1"/>
</dbReference>
<dbReference type="RefSeq" id="WP_003721912.1">
    <property type="nucleotide sequence ID" value="NZ_CP149495.1"/>
</dbReference>
<dbReference type="SMR" id="P0A442"/>
<dbReference type="STRING" id="169963.gene:17594064"/>
<dbReference type="PaxDb" id="169963-lmo1407"/>
<dbReference type="EnsemblBacteria" id="CAC99485">
    <property type="protein sequence ID" value="CAC99485"/>
    <property type="gene ID" value="CAC99485"/>
</dbReference>
<dbReference type="GeneID" id="93234825"/>
<dbReference type="GeneID" id="986485"/>
<dbReference type="KEGG" id="lmo:lmo1407"/>
<dbReference type="PATRIC" id="fig|169963.11.peg.1446"/>
<dbReference type="eggNOG" id="COG1180">
    <property type="taxonomic scope" value="Bacteria"/>
</dbReference>
<dbReference type="HOGENOM" id="CLU_058969_1_1_9"/>
<dbReference type="OrthoDB" id="9782387at2"/>
<dbReference type="PhylomeDB" id="P0A442"/>
<dbReference type="BioCyc" id="LMON169963:LMO1407-MONOMER"/>
<dbReference type="Proteomes" id="UP000000817">
    <property type="component" value="Chromosome"/>
</dbReference>
<dbReference type="GO" id="GO:0005737">
    <property type="term" value="C:cytoplasm"/>
    <property type="evidence" value="ECO:0007669"/>
    <property type="project" value="UniProtKB-SubCell"/>
</dbReference>
<dbReference type="GO" id="GO:0051539">
    <property type="term" value="F:4 iron, 4 sulfur cluster binding"/>
    <property type="evidence" value="ECO:0007669"/>
    <property type="project" value="UniProtKB-KW"/>
</dbReference>
<dbReference type="GO" id="GO:0043365">
    <property type="term" value="F:[formate-C-acetyltransferase]-activating enzyme activity"/>
    <property type="evidence" value="ECO:0007669"/>
    <property type="project" value="UniProtKB-EC"/>
</dbReference>
<dbReference type="GO" id="GO:0046872">
    <property type="term" value="F:metal ion binding"/>
    <property type="evidence" value="ECO:0007669"/>
    <property type="project" value="UniProtKB-KW"/>
</dbReference>
<dbReference type="CDD" id="cd01335">
    <property type="entry name" value="Radical_SAM"/>
    <property type="match status" value="1"/>
</dbReference>
<dbReference type="Gene3D" id="3.20.20.70">
    <property type="entry name" value="Aldolase class I"/>
    <property type="match status" value="1"/>
</dbReference>
<dbReference type="InterPro" id="IPR013785">
    <property type="entry name" value="Aldolase_TIM"/>
</dbReference>
<dbReference type="InterPro" id="IPR034457">
    <property type="entry name" value="Organic_radical-activating"/>
</dbReference>
<dbReference type="InterPro" id="IPR012839">
    <property type="entry name" value="Organic_radical_activase"/>
</dbReference>
<dbReference type="InterPro" id="IPR012838">
    <property type="entry name" value="PFL1_activating"/>
</dbReference>
<dbReference type="InterPro" id="IPR034465">
    <property type="entry name" value="Pyruvate_for-lyase_activase"/>
</dbReference>
<dbReference type="InterPro" id="IPR001989">
    <property type="entry name" value="Radical_activat_CS"/>
</dbReference>
<dbReference type="InterPro" id="IPR007197">
    <property type="entry name" value="rSAM"/>
</dbReference>
<dbReference type="NCBIfam" id="TIGR02493">
    <property type="entry name" value="PFLA"/>
    <property type="match status" value="1"/>
</dbReference>
<dbReference type="PANTHER" id="PTHR30352:SF5">
    <property type="entry name" value="PYRUVATE FORMATE-LYASE 1-ACTIVATING ENZYME"/>
    <property type="match status" value="1"/>
</dbReference>
<dbReference type="PANTHER" id="PTHR30352">
    <property type="entry name" value="PYRUVATE FORMATE-LYASE-ACTIVATING ENZYME"/>
    <property type="match status" value="1"/>
</dbReference>
<dbReference type="Pfam" id="PF13353">
    <property type="entry name" value="Fer4_12"/>
    <property type="match status" value="1"/>
</dbReference>
<dbReference type="Pfam" id="PF04055">
    <property type="entry name" value="Radical_SAM"/>
    <property type="match status" value="1"/>
</dbReference>
<dbReference type="PIRSF" id="PIRSF000371">
    <property type="entry name" value="PFL_act_enz"/>
    <property type="match status" value="1"/>
</dbReference>
<dbReference type="SFLD" id="SFLDG01066">
    <property type="entry name" value="organic_radical-activating_enz"/>
    <property type="match status" value="1"/>
</dbReference>
<dbReference type="SFLD" id="SFLDF00278">
    <property type="entry name" value="pyruvate_formate-lyase_activas"/>
    <property type="match status" value="1"/>
</dbReference>
<dbReference type="SUPFAM" id="SSF102114">
    <property type="entry name" value="Radical SAM enzymes"/>
    <property type="match status" value="1"/>
</dbReference>
<dbReference type="PROSITE" id="PS01087">
    <property type="entry name" value="RADICAL_ACTIVATING"/>
    <property type="match status" value="1"/>
</dbReference>
<dbReference type="PROSITE" id="PS51918">
    <property type="entry name" value="RADICAL_SAM"/>
    <property type="match status" value="1"/>
</dbReference>
<name>PFLA_LISMO</name>
<evidence type="ECO:0000250" key="1"/>
<evidence type="ECO:0000250" key="2">
    <source>
        <dbReference type="UniProtKB" id="P0A9N4"/>
    </source>
</evidence>
<evidence type="ECO:0000255" key="3">
    <source>
        <dbReference type="PROSITE-ProRule" id="PRU01266"/>
    </source>
</evidence>
<evidence type="ECO:0000305" key="4"/>
<feature type="chain" id="PRO_0000200532" description="Pyruvate formate-lyase-activating enzyme">
    <location>
        <begin position="1"/>
        <end position="248"/>
    </location>
</feature>
<feature type="domain" description="Radical SAM core" evidence="3">
    <location>
        <begin position="17"/>
        <end position="248"/>
    </location>
</feature>
<feature type="binding site" evidence="2">
    <location>
        <position position="31"/>
    </location>
    <ligand>
        <name>[4Fe-4S] cluster</name>
        <dbReference type="ChEBI" id="CHEBI:49883"/>
        <note>4Fe-4S-S-AdoMet</note>
    </ligand>
</feature>
<feature type="binding site" evidence="2">
    <location>
        <position position="35"/>
    </location>
    <ligand>
        <name>[4Fe-4S] cluster</name>
        <dbReference type="ChEBI" id="CHEBI:49883"/>
        <note>4Fe-4S-S-AdoMet</note>
    </ligand>
</feature>
<feature type="binding site" evidence="2">
    <location>
        <begin position="37"/>
        <end position="39"/>
    </location>
    <ligand>
        <name>S-adenosyl-L-methionine</name>
        <dbReference type="ChEBI" id="CHEBI:59789"/>
    </ligand>
</feature>
<feature type="binding site" evidence="2">
    <location>
        <position position="38"/>
    </location>
    <ligand>
        <name>[4Fe-4S] cluster</name>
        <dbReference type="ChEBI" id="CHEBI:49883"/>
        <note>4Fe-4S-S-AdoMet</note>
    </ligand>
</feature>
<feature type="binding site" evidence="2">
    <location>
        <position position="80"/>
    </location>
    <ligand>
        <name>S-adenosyl-L-methionine</name>
        <dbReference type="ChEBI" id="CHEBI:59789"/>
    </ligand>
</feature>
<feature type="binding site" evidence="2">
    <location>
        <begin position="135"/>
        <end position="137"/>
    </location>
    <ligand>
        <name>S-adenosyl-L-methionine</name>
        <dbReference type="ChEBI" id="CHEBI:59789"/>
    </ligand>
</feature>
<feature type="binding site" evidence="2">
    <location>
        <position position="208"/>
    </location>
    <ligand>
        <name>S-adenosyl-L-methionine</name>
        <dbReference type="ChEBI" id="CHEBI:59789"/>
    </ligand>
</feature>
<sequence length="248" mass="28115">MTEVLGRVHSVETMGTVDGPGIRFIVFMQGCLLRCQFCHNPDTWKIGTGTERSAQDVFDEAIKYKEFWDASGGGVTVSGGEPLLQVDFLIEFFTLCKAAGVHTTIDSCGGCFTRDPEFIEKLDRLMEVTDLILLDIKQINPEKHLKLTTKSNAPIIDFAHYLRDKEQPIWIRHVLIPTKTDDPEDLTKLHEFIQTLPNVKQVDVLPYHTMGVYKWKEMGIRYPLEGIEAPEEEVVALANKILETSSYK</sequence>